<reference key="1">
    <citation type="journal article" date="1995" name="Protein Pept. Lett.">
        <title>Sequence of Schistosoma mansoni cathepsin C and its structural comparison with papain and cathepsins B and L of the parasite.</title>
        <authorList>
            <person name="Butler R."/>
            <person name="Michel A."/>
            <person name="Kunz W."/>
            <person name="Klinkert M.-Q."/>
        </authorList>
    </citation>
    <scope>NUCLEOTIDE SEQUENCE [MRNA]</scope>
    <source>
        <strain>Liberian</strain>
    </source>
</reference>
<comment type="function">
    <text>Thiol protease. Has a role as a digestive enzyme.</text>
</comment>
<comment type="cofactor">
    <cofactor evidence="1">
        <name>chloride</name>
        <dbReference type="ChEBI" id="CHEBI:17996"/>
    </cofactor>
    <text evidence="1">Binds 1 Cl(-) ion per heavy chain.</text>
</comment>
<comment type="subcellular location">
    <subcellularLocation>
        <location>Lysosome</location>
    </subcellularLocation>
</comment>
<comment type="similarity">
    <text evidence="3">Belongs to the peptidase C1 family.</text>
</comment>
<dbReference type="EC" id="3.4.22.-"/>
<dbReference type="EMBL" id="Z32531">
    <property type="protein sequence ID" value="CAA83543.1"/>
    <property type="molecule type" value="mRNA"/>
</dbReference>
<dbReference type="SMR" id="Q26563"/>
<dbReference type="STRING" id="6183.Q26563"/>
<dbReference type="MEROPS" id="C01.070"/>
<dbReference type="eggNOG" id="KOG1543">
    <property type="taxonomic scope" value="Eukaryota"/>
</dbReference>
<dbReference type="HOGENOM" id="CLU_048219_0_0_1"/>
<dbReference type="InParanoid" id="Q26563"/>
<dbReference type="Proteomes" id="UP000008854">
    <property type="component" value="Unassembled WGS sequence"/>
</dbReference>
<dbReference type="GO" id="GO:0005764">
    <property type="term" value="C:lysosome"/>
    <property type="evidence" value="ECO:0007669"/>
    <property type="project" value="UniProtKB-SubCell"/>
</dbReference>
<dbReference type="GO" id="GO:0008234">
    <property type="term" value="F:cysteine-type peptidase activity"/>
    <property type="evidence" value="ECO:0007669"/>
    <property type="project" value="UniProtKB-KW"/>
</dbReference>
<dbReference type="GO" id="GO:0006508">
    <property type="term" value="P:proteolysis"/>
    <property type="evidence" value="ECO:0007669"/>
    <property type="project" value="UniProtKB-KW"/>
</dbReference>
<dbReference type="CDD" id="cd02621">
    <property type="entry name" value="Peptidase_C1A_CathepsinC"/>
    <property type="match status" value="1"/>
</dbReference>
<dbReference type="Gene3D" id="2.40.128.80">
    <property type="entry name" value="Cathepsin C, exclusion domain"/>
    <property type="match status" value="1"/>
</dbReference>
<dbReference type="Gene3D" id="3.90.70.10">
    <property type="entry name" value="Cysteine proteinases"/>
    <property type="match status" value="1"/>
</dbReference>
<dbReference type="InterPro" id="IPR039412">
    <property type="entry name" value="CatC"/>
</dbReference>
<dbReference type="InterPro" id="IPR014882">
    <property type="entry name" value="CathepsinC_exc"/>
</dbReference>
<dbReference type="InterPro" id="IPR036496">
    <property type="entry name" value="CathepsinC_exc_dom_sf"/>
</dbReference>
<dbReference type="InterPro" id="IPR038765">
    <property type="entry name" value="Papain-like_cys_pep_sf"/>
</dbReference>
<dbReference type="InterPro" id="IPR025660">
    <property type="entry name" value="Pept_his_AS"/>
</dbReference>
<dbReference type="InterPro" id="IPR013128">
    <property type="entry name" value="Peptidase_C1A"/>
</dbReference>
<dbReference type="InterPro" id="IPR000668">
    <property type="entry name" value="Peptidase_C1A_C"/>
</dbReference>
<dbReference type="PANTHER" id="PTHR12411">
    <property type="entry name" value="CYSTEINE PROTEASE FAMILY C1-RELATED"/>
    <property type="match status" value="1"/>
</dbReference>
<dbReference type="Pfam" id="PF08773">
    <property type="entry name" value="CathepsinC_exc"/>
    <property type="match status" value="1"/>
</dbReference>
<dbReference type="Pfam" id="PF00112">
    <property type="entry name" value="Peptidase_C1"/>
    <property type="match status" value="1"/>
</dbReference>
<dbReference type="PRINTS" id="PR00705">
    <property type="entry name" value="PAPAIN"/>
</dbReference>
<dbReference type="SMART" id="SM00645">
    <property type="entry name" value="Pept_C1"/>
    <property type="match status" value="1"/>
</dbReference>
<dbReference type="SUPFAM" id="SSF54001">
    <property type="entry name" value="Cysteine proteinases"/>
    <property type="match status" value="1"/>
</dbReference>
<dbReference type="SUPFAM" id="SSF75001">
    <property type="entry name" value="Dipeptidyl peptidase I (cathepsin C), exclusion domain"/>
    <property type="match status" value="1"/>
</dbReference>
<dbReference type="PROSITE" id="PS00639">
    <property type="entry name" value="THIOL_PROTEASE_HIS"/>
    <property type="match status" value="1"/>
</dbReference>
<accession>Q26563</accession>
<organism>
    <name type="scientific">Schistosoma mansoni</name>
    <name type="common">Blood fluke</name>
    <dbReference type="NCBI Taxonomy" id="6183"/>
    <lineage>
        <taxon>Eukaryota</taxon>
        <taxon>Metazoa</taxon>
        <taxon>Spiralia</taxon>
        <taxon>Lophotrochozoa</taxon>
        <taxon>Platyhelminthes</taxon>
        <taxon>Trematoda</taxon>
        <taxon>Digenea</taxon>
        <taxon>Strigeidida</taxon>
        <taxon>Schistosomatoidea</taxon>
        <taxon>Schistosomatidae</taxon>
        <taxon>Schistosoma</taxon>
    </lineage>
</organism>
<name>CATC_SCHMA</name>
<sequence length="454" mass="51281">MHWVFHCILIILACLRFTCADTPANCTYEDAHGRWKFHIGDYQSKCPEKLNSKQSVVISLLYPDIAIDEFGNRGHWTLIYNQGFEVTINHRKWLVIFAYKSNGEFNCHKSMPMWTHDTLIDSGSVCSGKIGVHDKFHINKLFGSKSFGRTLYHINPSFVGKINAHQKSWRGEIYPELSKYTIDELRNRAGGVKSMVTRPSVLNRKTPSKELISLTGNLPLEFDWTSPPDGSRSPVTPIRNQGICGSCYASPSAAALEARIRLVSNFSEQPILSPQTVVDCSPYSEGCNGGFPFLIAGKYGEDFGLPQKIVIPYTGEDTGKCTVSKNCTRYYTTDYSYIGGYYGATNEKLMQLELISNGPFPVGFEVYEDFQFYKEGIYHHTTVQTDHYNFNPFELTNHAVLLVGYGVDKLSGEPYWKVKNSWGVEWGEQGYFRILRGTDECGVESLGVRFDPVL</sequence>
<protein>
    <recommendedName>
        <fullName>Cathepsin C</fullName>
        <ecNumber>3.4.22.-</ecNumber>
    </recommendedName>
</protein>
<keyword id="KW-1015">Disulfide bond</keyword>
<keyword id="KW-0325">Glycoprotein</keyword>
<keyword id="KW-0378">Hydrolase</keyword>
<keyword id="KW-0458">Lysosome</keyword>
<keyword id="KW-0645">Protease</keyword>
<keyword id="KW-1185">Reference proteome</keyword>
<keyword id="KW-0732">Signal</keyword>
<keyword id="KW-0788">Thiol protease</keyword>
<keyword id="KW-0865">Zymogen</keyword>
<feature type="signal peptide" evidence="2">
    <location>
        <begin position="1"/>
        <end position="20"/>
    </location>
</feature>
<feature type="propeptide" id="PRO_0000026356" evidence="2">
    <location>
        <begin position="21"/>
        <end position="217"/>
    </location>
</feature>
<feature type="chain" id="PRO_0000026357" description="Cathepsin C">
    <location>
        <begin position="218"/>
        <end position="454"/>
    </location>
</feature>
<feature type="active site" evidence="3">
    <location>
        <position position="247"/>
    </location>
</feature>
<feature type="active site" evidence="3">
    <location>
        <position position="398"/>
    </location>
</feature>
<feature type="active site" evidence="3">
    <location>
        <position position="420"/>
    </location>
</feature>
<feature type="binding site" evidence="1">
    <location>
        <position position="291"/>
    </location>
    <ligand>
        <name>chloride</name>
        <dbReference type="ChEBI" id="CHEBI:17996"/>
    </ligand>
</feature>
<feature type="binding site" evidence="1">
    <location>
        <position position="337"/>
    </location>
    <ligand>
        <name>chloride</name>
        <dbReference type="ChEBI" id="CHEBI:17996"/>
    </ligand>
</feature>
<feature type="glycosylation site" description="N-linked (GlcNAc...) asparagine" evidence="2">
    <location>
        <position position="25"/>
    </location>
</feature>
<feature type="glycosylation site" description="N-linked (GlcNAc...) asparagine" evidence="2">
    <location>
        <position position="265"/>
    </location>
</feature>
<feature type="glycosylation site" description="N-linked (GlcNAc...) asparagine" evidence="2">
    <location>
        <position position="326"/>
    </location>
</feature>
<feature type="disulfide bond" evidence="1">
    <location>
        <begin position="26"/>
        <end position="107"/>
    </location>
</feature>
<feature type="disulfide bond" evidence="1">
    <location>
        <begin position="244"/>
        <end position="287"/>
    </location>
</feature>
<feature type="disulfide bond" evidence="1">
    <location>
        <begin position="280"/>
        <end position="321"/>
    </location>
</feature>
<evidence type="ECO:0000250" key="1"/>
<evidence type="ECO:0000255" key="2"/>
<evidence type="ECO:0000255" key="3">
    <source>
        <dbReference type="PROSITE-ProRule" id="PRU10089"/>
    </source>
</evidence>
<proteinExistence type="evidence at transcript level"/>